<evidence type="ECO:0000255" key="1">
    <source>
        <dbReference type="HAMAP-Rule" id="MF_00534"/>
    </source>
</evidence>
<evidence type="ECO:0000256" key="2">
    <source>
        <dbReference type="SAM" id="MobiDB-lite"/>
    </source>
</evidence>
<feature type="chain" id="PRO_0000176472" description="Asparagine--tRNA ligase">
    <location>
        <begin position="1"/>
        <end position="523"/>
    </location>
</feature>
<feature type="region of interest" description="Disordered" evidence="2">
    <location>
        <begin position="329"/>
        <end position="350"/>
    </location>
</feature>
<sequence>MRAMHPLLKEILTHPPSGQHECVHGWVRSKRETKRAVFISLSDGSCPDTLQVTVPLPECSASLSSGAQAEQIPNVRDAVLQGETLAQTLKRVTTGACIRAEGALVPSPGAGQALELRACNLTVLGEAPAETYPLQKKSHSFEFLRAHAHLRARTSTFAACARVRSALAGAVHRFFSERHFQYVHTPIITASDCEGAGELFRVTTFDPVRIAREAHAAGAAGNPYALTYADDFFGKAARLTVSGQLQGEAYALALTRIYTFGPTFRAENSNTSRHLSEFWMVEPEIAFARITDCMDVAEEFLAYLLRAALKDCAQDIAFLDERAAQHARSARGDTPLAARSTARTPPVRTPGQLTRMLEDVARAPATRLTYTEAIKLLENSGRSFEFPVRWGCDLQSEHECFLTEEVFHGPVIVYDYPKEIKAFYMKLNADGTTVRSMDLLVPGLGEIMGGSEREEQFEVLCARIRASGFDPHDYRWYTDLRRFGTAPHAGFGLGFERLLQYVTGLGNIRDVIPFPRTPRTADF</sequence>
<accession>O83618</accession>
<protein>
    <recommendedName>
        <fullName evidence="1">Asparagine--tRNA ligase</fullName>
        <ecNumber evidence="1">6.1.1.22</ecNumber>
    </recommendedName>
    <alternativeName>
        <fullName evidence="1">Asparaginyl-tRNA synthetase</fullName>
        <shortName evidence="1">AsnRS</shortName>
    </alternativeName>
</protein>
<comment type="catalytic activity">
    <reaction evidence="1">
        <text>tRNA(Asn) + L-asparagine + ATP = L-asparaginyl-tRNA(Asn) + AMP + diphosphate + H(+)</text>
        <dbReference type="Rhea" id="RHEA:11180"/>
        <dbReference type="Rhea" id="RHEA-COMP:9659"/>
        <dbReference type="Rhea" id="RHEA-COMP:9674"/>
        <dbReference type="ChEBI" id="CHEBI:15378"/>
        <dbReference type="ChEBI" id="CHEBI:30616"/>
        <dbReference type="ChEBI" id="CHEBI:33019"/>
        <dbReference type="ChEBI" id="CHEBI:58048"/>
        <dbReference type="ChEBI" id="CHEBI:78442"/>
        <dbReference type="ChEBI" id="CHEBI:78515"/>
        <dbReference type="ChEBI" id="CHEBI:456215"/>
        <dbReference type="EC" id="6.1.1.22"/>
    </reaction>
</comment>
<comment type="subunit">
    <text evidence="1">Homodimer.</text>
</comment>
<comment type="subcellular location">
    <subcellularLocation>
        <location evidence="1">Cytoplasm</location>
    </subcellularLocation>
</comment>
<comment type="similarity">
    <text evidence="1">Belongs to the class-II aminoacyl-tRNA synthetase family.</text>
</comment>
<organism>
    <name type="scientific">Treponema pallidum (strain Nichols)</name>
    <dbReference type="NCBI Taxonomy" id="243276"/>
    <lineage>
        <taxon>Bacteria</taxon>
        <taxon>Pseudomonadati</taxon>
        <taxon>Spirochaetota</taxon>
        <taxon>Spirochaetia</taxon>
        <taxon>Spirochaetales</taxon>
        <taxon>Treponemataceae</taxon>
        <taxon>Treponema</taxon>
    </lineage>
</organism>
<name>SYN_TREPA</name>
<dbReference type="EC" id="6.1.1.22" evidence="1"/>
<dbReference type="EMBL" id="AE000520">
    <property type="protein sequence ID" value="AAC65585.1"/>
    <property type="molecule type" value="Genomic_DNA"/>
</dbReference>
<dbReference type="PIR" id="F71302">
    <property type="entry name" value="F71302"/>
</dbReference>
<dbReference type="SMR" id="O83618"/>
<dbReference type="STRING" id="243276.TP_0609"/>
<dbReference type="EnsemblBacteria" id="AAC65585">
    <property type="protein sequence ID" value="AAC65585"/>
    <property type="gene ID" value="TP_0609"/>
</dbReference>
<dbReference type="KEGG" id="tpa:TP_0609"/>
<dbReference type="KEGG" id="tpw:TPANIC_0609"/>
<dbReference type="eggNOG" id="COG0017">
    <property type="taxonomic scope" value="Bacteria"/>
</dbReference>
<dbReference type="HOGENOM" id="CLU_004553_2_0_12"/>
<dbReference type="OrthoDB" id="9762036at2"/>
<dbReference type="Proteomes" id="UP000000811">
    <property type="component" value="Chromosome"/>
</dbReference>
<dbReference type="GO" id="GO:0005737">
    <property type="term" value="C:cytoplasm"/>
    <property type="evidence" value="ECO:0007669"/>
    <property type="project" value="UniProtKB-SubCell"/>
</dbReference>
<dbReference type="GO" id="GO:0004816">
    <property type="term" value="F:asparagine-tRNA ligase activity"/>
    <property type="evidence" value="ECO:0007669"/>
    <property type="project" value="UniProtKB-UniRule"/>
</dbReference>
<dbReference type="GO" id="GO:0005524">
    <property type="term" value="F:ATP binding"/>
    <property type="evidence" value="ECO:0007669"/>
    <property type="project" value="UniProtKB-UniRule"/>
</dbReference>
<dbReference type="GO" id="GO:0003676">
    <property type="term" value="F:nucleic acid binding"/>
    <property type="evidence" value="ECO:0007669"/>
    <property type="project" value="InterPro"/>
</dbReference>
<dbReference type="GO" id="GO:0006421">
    <property type="term" value="P:asparaginyl-tRNA aminoacylation"/>
    <property type="evidence" value="ECO:0007669"/>
    <property type="project" value="UniProtKB-UniRule"/>
</dbReference>
<dbReference type="CDD" id="cd00776">
    <property type="entry name" value="AsxRS_core"/>
    <property type="match status" value="1"/>
</dbReference>
<dbReference type="CDD" id="cd04318">
    <property type="entry name" value="EcAsnRS_like_N"/>
    <property type="match status" value="1"/>
</dbReference>
<dbReference type="Gene3D" id="3.30.930.10">
    <property type="entry name" value="Bira Bifunctional Protein, Domain 2"/>
    <property type="match status" value="1"/>
</dbReference>
<dbReference type="Gene3D" id="2.40.50.140">
    <property type="entry name" value="Nucleic acid-binding proteins"/>
    <property type="match status" value="1"/>
</dbReference>
<dbReference type="HAMAP" id="MF_00534">
    <property type="entry name" value="Asn_tRNA_synth"/>
    <property type="match status" value="1"/>
</dbReference>
<dbReference type="InterPro" id="IPR004364">
    <property type="entry name" value="Aa-tRNA-synt_II"/>
</dbReference>
<dbReference type="InterPro" id="IPR006195">
    <property type="entry name" value="aa-tRNA-synth_II"/>
</dbReference>
<dbReference type="InterPro" id="IPR045864">
    <property type="entry name" value="aa-tRNA-synth_II/BPL/LPL"/>
</dbReference>
<dbReference type="InterPro" id="IPR004522">
    <property type="entry name" value="Asn-tRNA-ligase"/>
</dbReference>
<dbReference type="InterPro" id="IPR002312">
    <property type="entry name" value="Asp/Asn-tRNA-synth_IIb"/>
</dbReference>
<dbReference type="InterPro" id="IPR012340">
    <property type="entry name" value="NA-bd_OB-fold"/>
</dbReference>
<dbReference type="InterPro" id="IPR004365">
    <property type="entry name" value="NA-bd_OB_tRNA"/>
</dbReference>
<dbReference type="NCBIfam" id="NF003037">
    <property type="entry name" value="PRK03932.1"/>
    <property type="match status" value="1"/>
</dbReference>
<dbReference type="PANTHER" id="PTHR22594:SF34">
    <property type="entry name" value="ASPARAGINE--TRNA LIGASE, MITOCHONDRIAL-RELATED"/>
    <property type="match status" value="1"/>
</dbReference>
<dbReference type="PANTHER" id="PTHR22594">
    <property type="entry name" value="ASPARTYL/LYSYL-TRNA SYNTHETASE"/>
    <property type="match status" value="1"/>
</dbReference>
<dbReference type="Pfam" id="PF00152">
    <property type="entry name" value="tRNA-synt_2"/>
    <property type="match status" value="1"/>
</dbReference>
<dbReference type="Pfam" id="PF01336">
    <property type="entry name" value="tRNA_anti-codon"/>
    <property type="match status" value="1"/>
</dbReference>
<dbReference type="PRINTS" id="PR01042">
    <property type="entry name" value="TRNASYNTHASP"/>
</dbReference>
<dbReference type="SUPFAM" id="SSF55681">
    <property type="entry name" value="Class II aaRS and biotin synthetases"/>
    <property type="match status" value="1"/>
</dbReference>
<dbReference type="SUPFAM" id="SSF50249">
    <property type="entry name" value="Nucleic acid-binding proteins"/>
    <property type="match status" value="1"/>
</dbReference>
<dbReference type="PROSITE" id="PS50862">
    <property type="entry name" value="AA_TRNA_LIGASE_II"/>
    <property type="match status" value="1"/>
</dbReference>
<gene>
    <name evidence="1" type="primary">asnS</name>
    <name type="ordered locus">TP_0609</name>
</gene>
<keyword id="KW-0030">Aminoacyl-tRNA synthetase</keyword>
<keyword id="KW-0067">ATP-binding</keyword>
<keyword id="KW-0963">Cytoplasm</keyword>
<keyword id="KW-0436">Ligase</keyword>
<keyword id="KW-0547">Nucleotide-binding</keyword>
<keyword id="KW-0648">Protein biosynthesis</keyword>
<keyword id="KW-1185">Reference proteome</keyword>
<proteinExistence type="inferred from homology"/>
<reference key="1">
    <citation type="journal article" date="1998" name="Science">
        <title>Complete genome sequence of Treponema pallidum, the syphilis spirochete.</title>
        <authorList>
            <person name="Fraser C.M."/>
            <person name="Norris S.J."/>
            <person name="Weinstock G.M."/>
            <person name="White O."/>
            <person name="Sutton G.G."/>
            <person name="Dodson R.J."/>
            <person name="Gwinn M.L."/>
            <person name="Hickey E.K."/>
            <person name="Clayton R.A."/>
            <person name="Ketchum K.A."/>
            <person name="Sodergren E."/>
            <person name="Hardham J.M."/>
            <person name="McLeod M.P."/>
            <person name="Salzberg S.L."/>
            <person name="Peterson J.D."/>
            <person name="Khalak H.G."/>
            <person name="Richardson D.L."/>
            <person name="Howell J.K."/>
            <person name="Chidambaram M."/>
            <person name="Utterback T.R."/>
            <person name="McDonald L.A."/>
            <person name="Artiach P."/>
            <person name="Bowman C."/>
            <person name="Cotton M.D."/>
            <person name="Fujii C."/>
            <person name="Garland S.A."/>
            <person name="Hatch B."/>
            <person name="Horst K."/>
            <person name="Roberts K.M."/>
            <person name="Sandusky M."/>
            <person name="Weidman J.F."/>
            <person name="Smith H.O."/>
            <person name="Venter J.C."/>
        </authorList>
    </citation>
    <scope>NUCLEOTIDE SEQUENCE [LARGE SCALE GENOMIC DNA]</scope>
    <source>
        <strain>Nichols</strain>
    </source>
</reference>